<accession>P73888</accession>
<dbReference type="EMBL" id="BA000022">
    <property type="protein sequence ID" value="BAA17952.1"/>
    <property type="molecule type" value="Genomic_DNA"/>
</dbReference>
<dbReference type="PIR" id="S75090">
    <property type="entry name" value="S75090"/>
</dbReference>
<dbReference type="STRING" id="1148.gene:10498821"/>
<dbReference type="PaxDb" id="1148-1653035"/>
<dbReference type="EnsemblBacteria" id="BAA17952">
    <property type="protein sequence ID" value="BAA17952"/>
    <property type="gene ID" value="BAA17952"/>
</dbReference>
<dbReference type="KEGG" id="syn:slr0269"/>
<dbReference type="eggNOG" id="ENOG502ZBN5">
    <property type="taxonomic scope" value="Bacteria"/>
</dbReference>
<dbReference type="InParanoid" id="P73888"/>
<dbReference type="Proteomes" id="UP000001425">
    <property type="component" value="Chromosome"/>
</dbReference>
<dbReference type="GO" id="GO:0005886">
    <property type="term" value="C:plasma membrane"/>
    <property type="evidence" value="ECO:0007669"/>
    <property type="project" value="UniProtKB-SubCell"/>
</dbReference>
<feature type="chain" id="PRO_0000157865" description="Uncharacterized protein slr0269">
    <location>
        <begin position="1"/>
        <end position="199"/>
    </location>
</feature>
<feature type="transmembrane region" description="Helical" evidence="1">
    <location>
        <begin position="27"/>
        <end position="47"/>
    </location>
</feature>
<feature type="transmembrane region" description="Helical" evidence="1">
    <location>
        <begin position="55"/>
        <end position="75"/>
    </location>
</feature>
<feature type="transmembrane region" description="Helical" evidence="1">
    <location>
        <begin position="172"/>
        <end position="192"/>
    </location>
</feature>
<comment type="subcellular location">
    <subcellularLocation>
        <location evidence="2">Cell membrane</location>
        <topology evidence="2">Multi-pass membrane protein</topology>
    </subcellularLocation>
</comment>
<evidence type="ECO:0000255" key="1"/>
<evidence type="ECO:0000305" key="2"/>
<keyword id="KW-1003">Cell membrane</keyword>
<keyword id="KW-0472">Membrane</keyword>
<keyword id="KW-1185">Reference proteome</keyword>
<keyword id="KW-0812">Transmembrane</keyword>
<keyword id="KW-1133">Transmembrane helix</keyword>
<sequence>MPSTFSQPSPSNALVNDRRDVFPLSPLIKITLVNLYLALTVPLPILAQLTQGNALLTLLLTVGLMGGLVALVAALAEQVVLNGEGIAVRYPRWVPKFFRSGWQLSWADVTALKCRTTGQGGLVYYFLTESKDRAYLLPMRVAGFNRLTQLVSDHTGIDTQDVRPLSQPWMYLLLLLFTFLLWGSQLAIVLLLWSSPPLA</sequence>
<organism>
    <name type="scientific">Synechocystis sp. (strain ATCC 27184 / PCC 6803 / Kazusa)</name>
    <dbReference type="NCBI Taxonomy" id="1111708"/>
    <lineage>
        <taxon>Bacteria</taxon>
        <taxon>Bacillati</taxon>
        <taxon>Cyanobacteriota</taxon>
        <taxon>Cyanophyceae</taxon>
        <taxon>Synechococcales</taxon>
        <taxon>Merismopediaceae</taxon>
        <taxon>Synechocystis</taxon>
    </lineage>
</organism>
<name>Y269_SYNY3</name>
<reference key="1">
    <citation type="journal article" date="1996" name="DNA Res.">
        <title>Sequence analysis of the genome of the unicellular cyanobacterium Synechocystis sp. strain PCC6803. II. Sequence determination of the entire genome and assignment of potential protein-coding regions.</title>
        <authorList>
            <person name="Kaneko T."/>
            <person name="Sato S."/>
            <person name="Kotani H."/>
            <person name="Tanaka A."/>
            <person name="Asamizu E."/>
            <person name="Nakamura Y."/>
            <person name="Miyajima N."/>
            <person name="Hirosawa M."/>
            <person name="Sugiura M."/>
            <person name="Sasamoto S."/>
            <person name="Kimura T."/>
            <person name="Hosouchi T."/>
            <person name="Matsuno A."/>
            <person name="Muraki A."/>
            <person name="Nakazaki N."/>
            <person name="Naruo K."/>
            <person name="Okumura S."/>
            <person name="Shimpo S."/>
            <person name="Takeuchi C."/>
            <person name="Wada T."/>
            <person name="Watanabe A."/>
            <person name="Yamada M."/>
            <person name="Yasuda M."/>
            <person name="Tabata S."/>
        </authorList>
    </citation>
    <scope>NUCLEOTIDE SEQUENCE [LARGE SCALE GENOMIC DNA]</scope>
    <source>
        <strain>ATCC 27184 / PCC 6803 / Kazusa</strain>
    </source>
</reference>
<proteinExistence type="predicted"/>
<protein>
    <recommendedName>
        <fullName>Uncharacterized protein slr0269</fullName>
    </recommendedName>
</protein>
<gene>
    <name type="ordered locus">slr0269</name>
</gene>